<gene>
    <name evidence="4" type="primary">BOD1L2</name>
    <name evidence="4" type="synonym">BOD1P</name>
    <name evidence="4" type="synonym">FAM44C</name>
</gene>
<comment type="function">
    <text evidence="1">May play a role in proper chromosome biorientation through the detection or correction of syntelic attachments in mitotic spindles.</text>
</comment>
<comment type="interaction">
    <interactant intactId="EBI-12118438">
        <id>Q8IYS8</id>
    </interactant>
    <interactant intactId="EBI-748171">
        <id>O43186</id>
        <label>CRX</label>
    </interactant>
    <organismsDiffer>false</organismsDiffer>
    <experiments>3</experiments>
</comment>
<comment type="interaction">
    <interactant intactId="EBI-12118438">
        <id>Q8IYS8</id>
    </interactant>
    <interactant intactId="EBI-2865388">
        <id>Q969G2</id>
        <label>LHX4</label>
    </interactant>
    <organismsDiffer>false</organismsDiffer>
    <experiments>3</experiments>
</comment>
<comment type="interaction">
    <interactant intactId="EBI-12118438">
        <id>Q8IYS8</id>
    </interactant>
    <interactant intactId="EBI-16439278">
        <id>Q6FHY5</id>
        <label>MEOX2</label>
    </interactant>
    <organismsDiffer>false</organismsDiffer>
    <experiments>3</experiments>
</comment>
<comment type="interaction">
    <interactant intactId="EBI-12118438">
        <id>Q8IYS8</id>
    </interactant>
    <interactant intactId="EBI-2805516">
        <id>P31321</id>
        <label>PRKAR1B</label>
    </interactant>
    <organismsDiffer>false</organismsDiffer>
    <experiments>3</experiments>
</comment>
<comment type="interaction">
    <interactant intactId="EBI-12118438">
        <id>Q8IYS8</id>
    </interactant>
    <interactant intactId="EBI-355744">
        <id>Q12933</id>
        <label>TRAF2</label>
    </interactant>
    <organismsDiffer>false</organismsDiffer>
    <experiments>3</experiments>
</comment>
<comment type="subcellular location">
    <subcellularLocation>
        <location evidence="1">Cytoplasm</location>
        <location evidence="1">Cytoskeleton</location>
        <location evidence="1">Microtubule organizing center</location>
        <location evidence="1">Centrosome</location>
    </subcellularLocation>
    <subcellularLocation>
        <location evidence="1">Chromosome</location>
        <location evidence="1">Centromere</location>
        <location evidence="1">Kinetochore</location>
    </subcellularLocation>
</comment>
<comment type="similarity">
    <text evidence="3">Belongs to the BOD1 family.</text>
</comment>
<proteinExistence type="evidence at protein level"/>
<reference key="1">
    <citation type="journal article" date="2004" name="Nat. Genet.">
        <title>Complete sequencing and characterization of 21,243 full-length human cDNAs.</title>
        <authorList>
            <person name="Ota T."/>
            <person name="Suzuki Y."/>
            <person name="Nishikawa T."/>
            <person name="Otsuki T."/>
            <person name="Sugiyama T."/>
            <person name="Irie R."/>
            <person name="Wakamatsu A."/>
            <person name="Hayashi K."/>
            <person name="Sato H."/>
            <person name="Nagai K."/>
            <person name="Kimura K."/>
            <person name="Makita H."/>
            <person name="Sekine M."/>
            <person name="Obayashi M."/>
            <person name="Nishi T."/>
            <person name="Shibahara T."/>
            <person name="Tanaka T."/>
            <person name="Ishii S."/>
            <person name="Yamamoto J."/>
            <person name="Saito K."/>
            <person name="Kawai Y."/>
            <person name="Isono Y."/>
            <person name="Nakamura Y."/>
            <person name="Nagahari K."/>
            <person name="Murakami K."/>
            <person name="Yasuda T."/>
            <person name="Iwayanagi T."/>
            <person name="Wagatsuma M."/>
            <person name="Shiratori A."/>
            <person name="Sudo H."/>
            <person name="Hosoiri T."/>
            <person name="Kaku Y."/>
            <person name="Kodaira H."/>
            <person name="Kondo H."/>
            <person name="Sugawara M."/>
            <person name="Takahashi M."/>
            <person name="Kanda K."/>
            <person name="Yokoi T."/>
            <person name="Furuya T."/>
            <person name="Kikkawa E."/>
            <person name="Omura Y."/>
            <person name="Abe K."/>
            <person name="Kamihara K."/>
            <person name="Katsuta N."/>
            <person name="Sato K."/>
            <person name="Tanikawa M."/>
            <person name="Yamazaki M."/>
            <person name="Ninomiya K."/>
            <person name="Ishibashi T."/>
            <person name="Yamashita H."/>
            <person name="Murakawa K."/>
            <person name="Fujimori K."/>
            <person name="Tanai H."/>
            <person name="Kimata M."/>
            <person name="Watanabe M."/>
            <person name="Hiraoka S."/>
            <person name="Chiba Y."/>
            <person name="Ishida S."/>
            <person name="Ono Y."/>
            <person name="Takiguchi S."/>
            <person name="Watanabe S."/>
            <person name="Yosida M."/>
            <person name="Hotuta T."/>
            <person name="Kusano J."/>
            <person name="Kanehori K."/>
            <person name="Takahashi-Fujii A."/>
            <person name="Hara H."/>
            <person name="Tanase T.-O."/>
            <person name="Nomura Y."/>
            <person name="Togiya S."/>
            <person name="Komai F."/>
            <person name="Hara R."/>
            <person name="Takeuchi K."/>
            <person name="Arita M."/>
            <person name="Imose N."/>
            <person name="Musashino K."/>
            <person name="Yuuki H."/>
            <person name="Oshima A."/>
            <person name="Sasaki N."/>
            <person name="Aotsuka S."/>
            <person name="Yoshikawa Y."/>
            <person name="Matsunawa H."/>
            <person name="Ichihara T."/>
            <person name="Shiohata N."/>
            <person name="Sano S."/>
            <person name="Moriya S."/>
            <person name="Momiyama H."/>
            <person name="Satoh N."/>
            <person name="Takami S."/>
            <person name="Terashima Y."/>
            <person name="Suzuki O."/>
            <person name="Nakagawa S."/>
            <person name="Senoh A."/>
            <person name="Mizoguchi H."/>
            <person name="Goto Y."/>
            <person name="Shimizu F."/>
            <person name="Wakebe H."/>
            <person name="Hishigaki H."/>
            <person name="Watanabe T."/>
            <person name="Sugiyama A."/>
            <person name="Takemoto M."/>
            <person name="Kawakami B."/>
            <person name="Yamazaki M."/>
            <person name="Watanabe K."/>
            <person name="Kumagai A."/>
            <person name="Itakura S."/>
            <person name="Fukuzumi Y."/>
            <person name="Fujimori Y."/>
            <person name="Komiyama M."/>
            <person name="Tashiro H."/>
            <person name="Tanigami A."/>
            <person name="Fujiwara T."/>
            <person name="Ono T."/>
            <person name="Yamada K."/>
            <person name="Fujii Y."/>
            <person name="Ozaki K."/>
            <person name="Hirao M."/>
            <person name="Ohmori Y."/>
            <person name="Kawabata A."/>
            <person name="Hikiji T."/>
            <person name="Kobatake N."/>
            <person name="Inagaki H."/>
            <person name="Ikema Y."/>
            <person name="Okamoto S."/>
            <person name="Okitani R."/>
            <person name="Kawakami T."/>
            <person name="Noguchi S."/>
            <person name="Itoh T."/>
            <person name="Shigeta K."/>
            <person name="Senba T."/>
            <person name="Matsumura K."/>
            <person name="Nakajima Y."/>
            <person name="Mizuno T."/>
            <person name="Morinaga M."/>
            <person name="Sasaki M."/>
            <person name="Togashi T."/>
            <person name="Oyama M."/>
            <person name="Hata H."/>
            <person name="Watanabe M."/>
            <person name="Komatsu T."/>
            <person name="Mizushima-Sugano J."/>
            <person name="Satoh T."/>
            <person name="Shirai Y."/>
            <person name="Takahashi Y."/>
            <person name="Nakagawa K."/>
            <person name="Okumura K."/>
            <person name="Nagase T."/>
            <person name="Nomura N."/>
            <person name="Kikuchi H."/>
            <person name="Masuho Y."/>
            <person name="Yamashita R."/>
            <person name="Nakai K."/>
            <person name="Yada T."/>
            <person name="Nakamura Y."/>
            <person name="Ohara O."/>
            <person name="Isogai T."/>
            <person name="Sugano S."/>
        </authorList>
    </citation>
    <scope>NUCLEOTIDE SEQUENCE [LARGE SCALE MRNA]</scope>
    <source>
        <tissue>Testis</tissue>
    </source>
</reference>
<reference key="2">
    <citation type="journal article" date="2005" name="Nature">
        <title>DNA sequence and analysis of human chromosome 18.</title>
        <authorList>
            <person name="Nusbaum C."/>
            <person name="Zody M.C."/>
            <person name="Borowsky M.L."/>
            <person name="Kamal M."/>
            <person name="Kodira C.D."/>
            <person name="Taylor T.D."/>
            <person name="Whittaker C.A."/>
            <person name="Chang J.L."/>
            <person name="Cuomo C.A."/>
            <person name="Dewar K."/>
            <person name="FitzGerald M.G."/>
            <person name="Yang X."/>
            <person name="Abouelleil A."/>
            <person name="Allen N.R."/>
            <person name="Anderson S."/>
            <person name="Bloom T."/>
            <person name="Bugalter B."/>
            <person name="Butler J."/>
            <person name="Cook A."/>
            <person name="DeCaprio D."/>
            <person name="Engels R."/>
            <person name="Garber M."/>
            <person name="Gnirke A."/>
            <person name="Hafez N."/>
            <person name="Hall J.L."/>
            <person name="Norman C.H."/>
            <person name="Itoh T."/>
            <person name="Jaffe D.B."/>
            <person name="Kuroki Y."/>
            <person name="Lehoczky J."/>
            <person name="Lui A."/>
            <person name="Macdonald P."/>
            <person name="Mauceli E."/>
            <person name="Mikkelsen T.S."/>
            <person name="Naylor J.W."/>
            <person name="Nicol R."/>
            <person name="Nguyen C."/>
            <person name="Noguchi H."/>
            <person name="O'Leary S.B."/>
            <person name="Piqani B."/>
            <person name="Smith C.L."/>
            <person name="Talamas J.A."/>
            <person name="Topham K."/>
            <person name="Totoki Y."/>
            <person name="Toyoda A."/>
            <person name="Wain H.M."/>
            <person name="Young S.K."/>
            <person name="Zeng Q."/>
            <person name="Zimmer A.R."/>
            <person name="Fujiyama A."/>
            <person name="Hattori M."/>
            <person name="Birren B.W."/>
            <person name="Sakaki Y."/>
            <person name="Lander E.S."/>
        </authorList>
    </citation>
    <scope>NUCLEOTIDE SEQUENCE [LARGE SCALE GENOMIC DNA]</scope>
</reference>
<reference key="3">
    <citation type="journal article" date="2004" name="Genome Res.">
        <title>The status, quality, and expansion of the NIH full-length cDNA project: the Mammalian Gene Collection (MGC).</title>
        <authorList>
            <consortium name="The MGC Project Team"/>
        </authorList>
    </citation>
    <scope>NUCLEOTIDE SEQUENCE [LARGE SCALE MRNA]</scope>
    <source>
        <tissue>Testis</tissue>
    </source>
</reference>
<feature type="chain" id="PRO_0000187033" description="Biorientation of chromosomes in cell division protein 1-like 2">
    <location>
        <begin position="1"/>
        <end position="172"/>
    </location>
</feature>
<feature type="region of interest" description="Disordered" evidence="2">
    <location>
        <begin position="1"/>
        <end position="35"/>
    </location>
</feature>
<feature type="region of interest" description="Disordered" evidence="2">
    <location>
        <begin position="151"/>
        <end position="172"/>
    </location>
</feature>
<feature type="compositionally biased region" description="Gly residues" evidence="2">
    <location>
        <begin position="1"/>
        <end position="13"/>
    </location>
</feature>
<feature type="compositionally biased region" description="Pro residues" evidence="2">
    <location>
        <begin position="154"/>
        <end position="172"/>
    </location>
</feature>
<feature type="sequence conflict" description="In Ref. 1; BAG54606." evidence="3" ref="1">
    <original>L</original>
    <variation>P</variation>
    <location>
        <position position="46"/>
    </location>
</feature>
<sequence>MADGGGGGSGGAGPASTRASGGGGPINPASLPPGDPQLIAIIVGQLKSRGLFDSFRRDCKADVDTKPAYQNLSQKADNFVSTHLDKQEWNPPANDNQLHDGLRQSVVQSGRSEAGVDRISSQVVDPKLNHIFRPQIEQIIHEFLVAQKEAAVPALPPEPEGQDPPAPSQDTS</sequence>
<keyword id="KW-0131">Cell cycle</keyword>
<keyword id="KW-0132">Cell division</keyword>
<keyword id="KW-0137">Centromere</keyword>
<keyword id="KW-0158">Chromosome</keyword>
<keyword id="KW-0963">Cytoplasm</keyword>
<keyword id="KW-0206">Cytoskeleton</keyword>
<keyword id="KW-0995">Kinetochore</keyword>
<keyword id="KW-0498">Mitosis</keyword>
<keyword id="KW-1267">Proteomics identification</keyword>
<keyword id="KW-1185">Reference proteome</keyword>
<accession>Q8IYS8</accession>
<accession>B3KXU4</accession>
<accession>Q8WW13</accession>
<dbReference type="EMBL" id="AK127964">
    <property type="protein sequence ID" value="BAG54606.1"/>
    <property type="molecule type" value="mRNA"/>
</dbReference>
<dbReference type="EMBL" id="AC100775">
    <property type="status" value="NOT_ANNOTATED_CDS"/>
    <property type="molecule type" value="mRNA"/>
</dbReference>
<dbReference type="EMBL" id="BC021740">
    <property type="status" value="NOT_ANNOTATED_CDS"/>
    <property type="molecule type" value="mRNA"/>
</dbReference>
<dbReference type="CCDS" id="CCDS59322.1"/>
<dbReference type="RefSeq" id="NP_001244893.1">
    <property type="nucleotide sequence ID" value="NM_001257964.2"/>
</dbReference>
<dbReference type="SMR" id="Q8IYS8"/>
<dbReference type="BioGRID" id="129806">
    <property type="interactions" value="63"/>
</dbReference>
<dbReference type="FunCoup" id="Q8IYS8">
    <property type="interactions" value="5"/>
</dbReference>
<dbReference type="IntAct" id="Q8IYS8">
    <property type="interactions" value="12"/>
</dbReference>
<dbReference type="STRING" id="9606.ENSP00000467843"/>
<dbReference type="iPTMnet" id="Q8IYS8"/>
<dbReference type="PhosphoSitePlus" id="Q8IYS8"/>
<dbReference type="BioMuta" id="BOD1L2"/>
<dbReference type="DMDM" id="125987827"/>
<dbReference type="jPOST" id="Q8IYS8"/>
<dbReference type="MassIVE" id="Q8IYS8"/>
<dbReference type="PaxDb" id="9606-ENSP00000467843"/>
<dbReference type="PeptideAtlas" id="Q8IYS8"/>
<dbReference type="ProteomicsDB" id="71231"/>
<dbReference type="Pumba" id="Q8IYS8"/>
<dbReference type="Antibodypedia" id="65878">
    <property type="antibodies" value="8 antibodies from 6 providers"/>
</dbReference>
<dbReference type="DNASU" id="284257"/>
<dbReference type="Ensembl" id="ENST00000585477.2">
    <property type="protein sequence ID" value="ENSP00000467843.1"/>
    <property type="gene ID" value="ENSG00000228075.5"/>
</dbReference>
<dbReference type="GeneID" id="284257"/>
<dbReference type="KEGG" id="hsa:284257"/>
<dbReference type="MANE-Select" id="ENST00000585477.2">
    <property type="protein sequence ID" value="ENSP00000467843.1"/>
    <property type="RefSeq nucleotide sequence ID" value="NM_001257964.2"/>
    <property type="RefSeq protein sequence ID" value="NP_001244893.1"/>
</dbReference>
<dbReference type="UCSC" id="uc002lgm.4">
    <property type="organism name" value="human"/>
</dbReference>
<dbReference type="AGR" id="HGNC:28505"/>
<dbReference type="CTD" id="284257"/>
<dbReference type="GeneCards" id="BOD1L2"/>
<dbReference type="HGNC" id="HGNC:28505">
    <property type="gene designation" value="BOD1L2"/>
</dbReference>
<dbReference type="HPA" id="ENSG00000228075">
    <property type="expression patterns" value="Tissue enriched (testis)"/>
</dbReference>
<dbReference type="neXtProt" id="NX_Q8IYS8"/>
<dbReference type="OpenTargets" id="ENSG00000228075"/>
<dbReference type="PharmGKB" id="PA166048984"/>
<dbReference type="VEuPathDB" id="HostDB:ENSG00000228075"/>
<dbReference type="eggNOG" id="ENOG502S57W">
    <property type="taxonomic scope" value="Eukaryota"/>
</dbReference>
<dbReference type="GeneTree" id="ENSGT00940000154979"/>
<dbReference type="HOGENOM" id="CLU_139504_0_0_1"/>
<dbReference type="InParanoid" id="Q8IYS8"/>
<dbReference type="OMA" id="RRDCQAD"/>
<dbReference type="OrthoDB" id="7605699at2759"/>
<dbReference type="PAN-GO" id="Q8IYS8">
    <property type="GO annotations" value="7 GO annotations based on evolutionary models"/>
</dbReference>
<dbReference type="PhylomeDB" id="Q8IYS8"/>
<dbReference type="PathwayCommons" id="Q8IYS8"/>
<dbReference type="SignaLink" id="Q8IYS8"/>
<dbReference type="BioGRID-ORCS" id="284257">
    <property type="hits" value="8 hits in 1135 CRISPR screens"/>
</dbReference>
<dbReference type="GenomeRNAi" id="284257"/>
<dbReference type="Pharos" id="Q8IYS8">
    <property type="development level" value="Tdark"/>
</dbReference>
<dbReference type="PRO" id="PR:Q8IYS8"/>
<dbReference type="Proteomes" id="UP000005640">
    <property type="component" value="Chromosome 18"/>
</dbReference>
<dbReference type="RNAct" id="Q8IYS8">
    <property type="molecule type" value="protein"/>
</dbReference>
<dbReference type="Bgee" id="ENSG00000228075">
    <property type="expression patterns" value="Expressed in sperm and 66 other cell types or tissues"/>
</dbReference>
<dbReference type="GO" id="GO:0005813">
    <property type="term" value="C:centrosome"/>
    <property type="evidence" value="ECO:0007669"/>
    <property type="project" value="UniProtKB-SubCell"/>
</dbReference>
<dbReference type="GO" id="GO:0005737">
    <property type="term" value="C:cytoplasm"/>
    <property type="evidence" value="ECO:0007669"/>
    <property type="project" value="UniProtKB-KW"/>
</dbReference>
<dbReference type="GO" id="GO:0000776">
    <property type="term" value="C:kinetochore"/>
    <property type="evidence" value="ECO:0007669"/>
    <property type="project" value="UniProtKB-KW"/>
</dbReference>
<dbReference type="GO" id="GO:0051301">
    <property type="term" value="P:cell division"/>
    <property type="evidence" value="ECO:0007669"/>
    <property type="project" value="UniProtKB-KW"/>
</dbReference>
<dbReference type="InterPro" id="IPR055264">
    <property type="entry name" value="BOD1/SHG1_dom"/>
</dbReference>
<dbReference type="InterPro" id="IPR043244">
    <property type="entry name" value="BOD1L1"/>
</dbReference>
<dbReference type="PANTHER" id="PTHR47391">
    <property type="entry name" value="BIORIENTATION OF CHROMOSOMES IN CELL DIVISION 1 LIKE 1"/>
    <property type="match status" value="1"/>
</dbReference>
<dbReference type="PANTHER" id="PTHR47391:SF1">
    <property type="entry name" value="BIORIENTATION OF CHROMOSOMES IN CELL DIVISION 1 LIKE 1"/>
    <property type="match status" value="1"/>
</dbReference>
<dbReference type="Pfam" id="PF05205">
    <property type="entry name" value="COMPASS-Shg1"/>
    <property type="match status" value="1"/>
</dbReference>
<organism>
    <name type="scientific">Homo sapiens</name>
    <name type="common">Human</name>
    <dbReference type="NCBI Taxonomy" id="9606"/>
    <lineage>
        <taxon>Eukaryota</taxon>
        <taxon>Metazoa</taxon>
        <taxon>Chordata</taxon>
        <taxon>Craniata</taxon>
        <taxon>Vertebrata</taxon>
        <taxon>Euteleostomi</taxon>
        <taxon>Mammalia</taxon>
        <taxon>Eutheria</taxon>
        <taxon>Euarchontoglires</taxon>
        <taxon>Primates</taxon>
        <taxon>Haplorrhini</taxon>
        <taxon>Catarrhini</taxon>
        <taxon>Hominidae</taxon>
        <taxon>Homo</taxon>
    </lineage>
</organism>
<protein>
    <recommendedName>
        <fullName evidence="3">Biorientation of chromosomes in cell division protein 1-like 2</fullName>
    </recommendedName>
    <alternativeName>
        <fullName evidence="3">Biorientation of chromosomes in cell division protein 1 pseudogene</fullName>
    </alternativeName>
    <alternativeName>
        <fullName evidence="3">Protein FAM44C</fullName>
    </alternativeName>
</protein>
<name>BD1L2_HUMAN</name>
<evidence type="ECO:0000250" key="1">
    <source>
        <dbReference type="UniProtKB" id="Q96IK1"/>
    </source>
</evidence>
<evidence type="ECO:0000256" key="2">
    <source>
        <dbReference type="SAM" id="MobiDB-lite"/>
    </source>
</evidence>
<evidence type="ECO:0000305" key="3"/>
<evidence type="ECO:0000312" key="4">
    <source>
        <dbReference type="HGNC" id="HGNC:28505"/>
    </source>
</evidence>